<accession>Q0APX7</accession>
<proteinExistence type="inferred from homology"/>
<evidence type="ECO:0000255" key="1">
    <source>
        <dbReference type="HAMAP-Rule" id="MF_00445"/>
    </source>
</evidence>
<protein>
    <recommendedName>
        <fullName evidence="1">NADH-quinone oxidoreductase subunit N</fullName>
        <ecNumber evidence="1">7.1.1.-</ecNumber>
    </recommendedName>
    <alternativeName>
        <fullName evidence="1">NADH dehydrogenase I subunit N</fullName>
    </alternativeName>
    <alternativeName>
        <fullName evidence="1">NDH-1 subunit N</fullName>
    </alternativeName>
</protein>
<reference key="1">
    <citation type="submission" date="2006-08" db="EMBL/GenBank/DDBJ databases">
        <title>Complete sequence of Maricaulis maris MCS10.</title>
        <authorList>
            <consortium name="US DOE Joint Genome Institute"/>
            <person name="Copeland A."/>
            <person name="Lucas S."/>
            <person name="Lapidus A."/>
            <person name="Barry K."/>
            <person name="Detter J.C."/>
            <person name="Glavina del Rio T."/>
            <person name="Hammon N."/>
            <person name="Israni S."/>
            <person name="Dalin E."/>
            <person name="Tice H."/>
            <person name="Pitluck S."/>
            <person name="Saunders E."/>
            <person name="Brettin T."/>
            <person name="Bruce D."/>
            <person name="Han C."/>
            <person name="Tapia R."/>
            <person name="Gilna P."/>
            <person name="Schmutz J."/>
            <person name="Larimer F."/>
            <person name="Land M."/>
            <person name="Hauser L."/>
            <person name="Kyrpides N."/>
            <person name="Mikhailova N."/>
            <person name="Viollier P."/>
            <person name="Stephens C."/>
            <person name="Richardson P."/>
        </authorList>
    </citation>
    <scope>NUCLEOTIDE SEQUENCE [LARGE SCALE GENOMIC DNA]</scope>
    <source>
        <strain>MCS10</strain>
    </source>
</reference>
<dbReference type="EC" id="7.1.1.-" evidence="1"/>
<dbReference type="EMBL" id="CP000449">
    <property type="protein sequence ID" value="ABI65660.1"/>
    <property type="molecule type" value="Genomic_DNA"/>
</dbReference>
<dbReference type="RefSeq" id="WP_011643307.1">
    <property type="nucleotide sequence ID" value="NC_008347.1"/>
</dbReference>
<dbReference type="SMR" id="Q0APX7"/>
<dbReference type="STRING" id="394221.Mmar10_1368"/>
<dbReference type="KEGG" id="mmr:Mmar10_1368"/>
<dbReference type="eggNOG" id="COG1007">
    <property type="taxonomic scope" value="Bacteria"/>
</dbReference>
<dbReference type="HOGENOM" id="CLU_007100_1_3_5"/>
<dbReference type="OrthoDB" id="9811718at2"/>
<dbReference type="Proteomes" id="UP000001964">
    <property type="component" value="Chromosome"/>
</dbReference>
<dbReference type="GO" id="GO:0005886">
    <property type="term" value="C:plasma membrane"/>
    <property type="evidence" value="ECO:0007669"/>
    <property type="project" value="UniProtKB-SubCell"/>
</dbReference>
<dbReference type="GO" id="GO:0008137">
    <property type="term" value="F:NADH dehydrogenase (ubiquinone) activity"/>
    <property type="evidence" value="ECO:0007669"/>
    <property type="project" value="InterPro"/>
</dbReference>
<dbReference type="GO" id="GO:0050136">
    <property type="term" value="F:NADH:ubiquinone reductase (non-electrogenic) activity"/>
    <property type="evidence" value="ECO:0007669"/>
    <property type="project" value="UniProtKB-UniRule"/>
</dbReference>
<dbReference type="GO" id="GO:0048038">
    <property type="term" value="F:quinone binding"/>
    <property type="evidence" value="ECO:0007669"/>
    <property type="project" value="UniProtKB-KW"/>
</dbReference>
<dbReference type="GO" id="GO:0042773">
    <property type="term" value="P:ATP synthesis coupled electron transport"/>
    <property type="evidence" value="ECO:0007669"/>
    <property type="project" value="InterPro"/>
</dbReference>
<dbReference type="HAMAP" id="MF_00445">
    <property type="entry name" value="NDH1_NuoN_1"/>
    <property type="match status" value="1"/>
</dbReference>
<dbReference type="InterPro" id="IPR010096">
    <property type="entry name" value="NADH-Q_OxRdtase_suN/2"/>
</dbReference>
<dbReference type="InterPro" id="IPR001750">
    <property type="entry name" value="ND/Mrp_TM"/>
</dbReference>
<dbReference type="NCBIfam" id="TIGR01770">
    <property type="entry name" value="NDH_I_N"/>
    <property type="match status" value="1"/>
</dbReference>
<dbReference type="NCBIfam" id="NF004440">
    <property type="entry name" value="PRK05777.1-3"/>
    <property type="match status" value="1"/>
</dbReference>
<dbReference type="PANTHER" id="PTHR22773">
    <property type="entry name" value="NADH DEHYDROGENASE"/>
    <property type="match status" value="1"/>
</dbReference>
<dbReference type="Pfam" id="PF00361">
    <property type="entry name" value="Proton_antipo_M"/>
    <property type="match status" value="1"/>
</dbReference>
<keyword id="KW-0997">Cell inner membrane</keyword>
<keyword id="KW-1003">Cell membrane</keyword>
<keyword id="KW-0472">Membrane</keyword>
<keyword id="KW-0520">NAD</keyword>
<keyword id="KW-0874">Quinone</keyword>
<keyword id="KW-1185">Reference proteome</keyword>
<keyword id="KW-1278">Translocase</keyword>
<keyword id="KW-0812">Transmembrane</keyword>
<keyword id="KW-1133">Transmembrane helix</keyword>
<keyword id="KW-0813">Transport</keyword>
<keyword id="KW-0830">Ubiquinone</keyword>
<organism>
    <name type="scientific">Maricaulis maris (strain MCS10)</name>
    <name type="common">Caulobacter maris</name>
    <dbReference type="NCBI Taxonomy" id="394221"/>
    <lineage>
        <taxon>Bacteria</taxon>
        <taxon>Pseudomonadati</taxon>
        <taxon>Pseudomonadota</taxon>
        <taxon>Alphaproteobacteria</taxon>
        <taxon>Maricaulales</taxon>
        <taxon>Maricaulaceae</taxon>
        <taxon>Maricaulis</taxon>
    </lineage>
</organism>
<name>NUON_MARMM</name>
<feature type="chain" id="PRO_0000391176" description="NADH-quinone oxidoreductase subunit N">
    <location>
        <begin position="1"/>
        <end position="480"/>
    </location>
</feature>
<feature type="transmembrane region" description="Helical" evidence="1">
    <location>
        <begin position="12"/>
        <end position="32"/>
    </location>
</feature>
<feature type="transmembrane region" description="Helical" evidence="1">
    <location>
        <begin position="41"/>
        <end position="61"/>
    </location>
</feature>
<feature type="transmembrane region" description="Helical" evidence="1">
    <location>
        <begin position="80"/>
        <end position="100"/>
    </location>
</feature>
<feature type="transmembrane region" description="Helical" evidence="1">
    <location>
        <begin position="105"/>
        <end position="125"/>
    </location>
</feature>
<feature type="transmembrane region" description="Helical" evidence="1">
    <location>
        <begin position="130"/>
        <end position="150"/>
    </location>
</feature>
<feature type="transmembrane region" description="Helical" evidence="1">
    <location>
        <begin position="165"/>
        <end position="185"/>
    </location>
</feature>
<feature type="transmembrane region" description="Helical" evidence="1">
    <location>
        <begin position="204"/>
        <end position="224"/>
    </location>
</feature>
<feature type="transmembrane region" description="Helical" evidence="1">
    <location>
        <begin position="237"/>
        <end position="257"/>
    </location>
</feature>
<feature type="transmembrane region" description="Helical" evidence="1">
    <location>
        <begin position="275"/>
        <end position="295"/>
    </location>
</feature>
<feature type="transmembrane region" description="Helical" evidence="1">
    <location>
        <begin position="300"/>
        <end position="320"/>
    </location>
</feature>
<feature type="transmembrane region" description="Helical" evidence="1">
    <location>
        <begin position="326"/>
        <end position="346"/>
    </location>
</feature>
<feature type="transmembrane region" description="Helical" evidence="1">
    <location>
        <begin position="372"/>
        <end position="392"/>
    </location>
</feature>
<feature type="transmembrane region" description="Helical" evidence="1">
    <location>
        <begin position="406"/>
        <end position="428"/>
    </location>
</feature>
<feature type="transmembrane region" description="Helical" evidence="1">
    <location>
        <begin position="450"/>
        <end position="470"/>
    </location>
</feature>
<sequence length="480" mass="50982">MTADMLSHDLSLLIPELVLAGGAMALLMLGVFLKGDGTEKLVQWLTVGLLAAAALAALFLVSGEGMAFNDSFVFDSLARFSKTAIGLVAAIAMLLAMPYLQAEKLGKIEYPVLVVLAVTGMMMMVSANDLIAMYMGIELQSLALYVLAAFNRDSLRASEAGLKYFVLGALSSGLLLYGASLVYGFAGSTGFGDIALAVESGSNIGLTVGLVFVICGLAFKVSAAPFHMWTPDVYEGAPTPVTAFFATAPKFAAIVLLARVLMEPFGAVVDQWRDVIWMIAVLSMAVGAFGALTQQNIKRLMAYSSISNMGYALVAVAAASQTGLWALLVFMVLYMVGAIGSFATILSMRTREGMVEQISDLAGLAQRNPGLGWSMTALMFSIGGLPFMVGFFGKFFVIYAAVQADLMILAVLAVLFSVVGAAYYLRIVKVIWFDSSEIEFVPSAVSTYWIARIAGLATVLLLPVLGWLVFRAYSVGLALL</sequence>
<comment type="function">
    <text evidence="1">NDH-1 shuttles electrons from NADH, via FMN and iron-sulfur (Fe-S) centers, to quinones in the respiratory chain. The immediate electron acceptor for the enzyme in this species is believed to be ubiquinone. Couples the redox reaction to proton translocation (for every two electrons transferred, four hydrogen ions are translocated across the cytoplasmic membrane), and thus conserves the redox energy in a proton gradient.</text>
</comment>
<comment type="catalytic activity">
    <reaction evidence="1">
        <text>a quinone + NADH + 5 H(+)(in) = a quinol + NAD(+) + 4 H(+)(out)</text>
        <dbReference type="Rhea" id="RHEA:57888"/>
        <dbReference type="ChEBI" id="CHEBI:15378"/>
        <dbReference type="ChEBI" id="CHEBI:24646"/>
        <dbReference type="ChEBI" id="CHEBI:57540"/>
        <dbReference type="ChEBI" id="CHEBI:57945"/>
        <dbReference type="ChEBI" id="CHEBI:132124"/>
    </reaction>
</comment>
<comment type="subunit">
    <text evidence="1">NDH-1 is composed of 14 different subunits. Subunits NuoA, H, J, K, L, M, N constitute the membrane sector of the complex.</text>
</comment>
<comment type="subcellular location">
    <subcellularLocation>
        <location evidence="1">Cell inner membrane</location>
        <topology evidence="1">Multi-pass membrane protein</topology>
    </subcellularLocation>
</comment>
<comment type="similarity">
    <text evidence="1">Belongs to the complex I subunit 2 family.</text>
</comment>
<gene>
    <name evidence="1" type="primary">nuoN</name>
    <name type="ordered locus">Mmar10_1368</name>
</gene>